<dbReference type="EC" id="3.4.23.36" evidence="1"/>
<dbReference type="EMBL" id="BA000017">
    <property type="protein sequence ID" value="BAB57358.1"/>
    <property type="molecule type" value="Genomic_DNA"/>
</dbReference>
<dbReference type="RefSeq" id="WP_000549207.1">
    <property type="nucleotide sequence ID" value="NC_002758.2"/>
</dbReference>
<dbReference type="SMR" id="P65266"/>
<dbReference type="KEGG" id="sav:SAV1196"/>
<dbReference type="HOGENOM" id="CLU_083252_3_0_9"/>
<dbReference type="PhylomeDB" id="P65266"/>
<dbReference type="UniPathway" id="UPA00665"/>
<dbReference type="Proteomes" id="UP000002481">
    <property type="component" value="Chromosome"/>
</dbReference>
<dbReference type="GO" id="GO:0005886">
    <property type="term" value="C:plasma membrane"/>
    <property type="evidence" value="ECO:0007669"/>
    <property type="project" value="UniProtKB-SubCell"/>
</dbReference>
<dbReference type="GO" id="GO:0004190">
    <property type="term" value="F:aspartic-type endopeptidase activity"/>
    <property type="evidence" value="ECO:0007669"/>
    <property type="project" value="UniProtKB-UniRule"/>
</dbReference>
<dbReference type="GO" id="GO:0006508">
    <property type="term" value="P:proteolysis"/>
    <property type="evidence" value="ECO:0007669"/>
    <property type="project" value="UniProtKB-KW"/>
</dbReference>
<dbReference type="HAMAP" id="MF_00161">
    <property type="entry name" value="LspA"/>
    <property type="match status" value="1"/>
</dbReference>
<dbReference type="InterPro" id="IPR001872">
    <property type="entry name" value="Peptidase_A8"/>
</dbReference>
<dbReference type="NCBIfam" id="TIGR00077">
    <property type="entry name" value="lspA"/>
    <property type="match status" value="1"/>
</dbReference>
<dbReference type="PANTHER" id="PTHR33695">
    <property type="entry name" value="LIPOPROTEIN SIGNAL PEPTIDASE"/>
    <property type="match status" value="1"/>
</dbReference>
<dbReference type="PANTHER" id="PTHR33695:SF1">
    <property type="entry name" value="LIPOPROTEIN SIGNAL PEPTIDASE"/>
    <property type="match status" value="1"/>
</dbReference>
<dbReference type="Pfam" id="PF01252">
    <property type="entry name" value="Peptidase_A8"/>
    <property type="match status" value="1"/>
</dbReference>
<dbReference type="PRINTS" id="PR00781">
    <property type="entry name" value="LIPOSIGPTASE"/>
</dbReference>
<dbReference type="PROSITE" id="PS00855">
    <property type="entry name" value="SPASE_II"/>
    <property type="match status" value="1"/>
</dbReference>
<keyword id="KW-0064">Aspartyl protease</keyword>
<keyword id="KW-1003">Cell membrane</keyword>
<keyword id="KW-0378">Hydrolase</keyword>
<keyword id="KW-0472">Membrane</keyword>
<keyword id="KW-0645">Protease</keyword>
<keyword id="KW-0812">Transmembrane</keyword>
<keyword id="KW-1133">Transmembrane helix</keyword>
<proteinExistence type="inferred from homology"/>
<gene>
    <name evidence="1" type="primary">lspA</name>
    <name type="synonym">lsp</name>
    <name type="ordered locus">SAV1196</name>
</gene>
<protein>
    <recommendedName>
        <fullName evidence="1">Lipoprotein signal peptidase</fullName>
        <ecNumber evidence="1">3.4.23.36</ecNumber>
    </recommendedName>
    <alternativeName>
        <fullName evidence="1">Prolipoprotein signal peptidase</fullName>
    </alternativeName>
    <alternativeName>
        <fullName evidence="1">Signal peptidase II</fullName>
        <shortName evidence="1">SPase II</shortName>
    </alternativeName>
</protein>
<name>LSPA_STAAM</name>
<sequence>MHKKYFIGTSILIAVFVVIFDQVTKYIIATTMKIGDSFEVIPHFLNITSHRNNGAAWGILSGKMTFFFIITIIILIALVYFFIKDAQYNLFMQVAISLLFAGALGNFIDRILTGEVVDFIDTNIFGYDFPIFNIADSSLTIGVILIIIALLKDTSNKKEKEVK</sequence>
<organism>
    <name type="scientific">Staphylococcus aureus (strain Mu50 / ATCC 700699)</name>
    <dbReference type="NCBI Taxonomy" id="158878"/>
    <lineage>
        <taxon>Bacteria</taxon>
        <taxon>Bacillati</taxon>
        <taxon>Bacillota</taxon>
        <taxon>Bacilli</taxon>
        <taxon>Bacillales</taxon>
        <taxon>Staphylococcaceae</taxon>
        <taxon>Staphylococcus</taxon>
    </lineage>
</organism>
<feature type="chain" id="PRO_0000178813" description="Lipoprotein signal peptidase">
    <location>
        <begin position="1"/>
        <end position="163"/>
    </location>
</feature>
<feature type="transmembrane region" description="Helical" evidence="1">
    <location>
        <begin position="11"/>
        <end position="31"/>
    </location>
</feature>
<feature type="transmembrane region" description="Helical" evidence="1">
    <location>
        <begin position="63"/>
        <end position="83"/>
    </location>
</feature>
<feature type="transmembrane region" description="Helical" evidence="1">
    <location>
        <begin position="88"/>
        <end position="108"/>
    </location>
</feature>
<feature type="transmembrane region" description="Helical" evidence="1">
    <location>
        <begin position="131"/>
        <end position="151"/>
    </location>
</feature>
<feature type="active site" evidence="1">
    <location>
        <position position="118"/>
    </location>
</feature>
<feature type="active site" evidence="1">
    <location>
        <position position="136"/>
    </location>
</feature>
<reference key="1">
    <citation type="journal article" date="2001" name="Lancet">
        <title>Whole genome sequencing of meticillin-resistant Staphylococcus aureus.</title>
        <authorList>
            <person name="Kuroda M."/>
            <person name="Ohta T."/>
            <person name="Uchiyama I."/>
            <person name="Baba T."/>
            <person name="Yuzawa H."/>
            <person name="Kobayashi I."/>
            <person name="Cui L."/>
            <person name="Oguchi A."/>
            <person name="Aoki K."/>
            <person name="Nagai Y."/>
            <person name="Lian J.-Q."/>
            <person name="Ito T."/>
            <person name="Kanamori M."/>
            <person name="Matsumaru H."/>
            <person name="Maruyama A."/>
            <person name="Murakami H."/>
            <person name="Hosoyama A."/>
            <person name="Mizutani-Ui Y."/>
            <person name="Takahashi N.K."/>
            <person name="Sawano T."/>
            <person name="Inoue R."/>
            <person name="Kaito C."/>
            <person name="Sekimizu K."/>
            <person name="Hirakawa H."/>
            <person name="Kuhara S."/>
            <person name="Goto S."/>
            <person name="Yabuzaki J."/>
            <person name="Kanehisa M."/>
            <person name="Yamashita A."/>
            <person name="Oshima K."/>
            <person name="Furuya K."/>
            <person name="Yoshino C."/>
            <person name="Shiba T."/>
            <person name="Hattori M."/>
            <person name="Ogasawara N."/>
            <person name="Hayashi H."/>
            <person name="Hiramatsu K."/>
        </authorList>
    </citation>
    <scope>NUCLEOTIDE SEQUENCE [LARGE SCALE GENOMIC DNA]</scope>
    <source>
        <strain>Mu50 / ATCC 700699</strain>
    </source>
</reference>
<comment type="function">
    <text evidence="1">This protein specifically catalyzes the removal of signal peptides from prolipoproteins.</text>
</comment>
<comment type="catalytic activity">
    <reaction evidence="1">
        <text>Release of signal peptides from bacterial membrane prolipoproteins. Hydrolyzes -Xaa-Yaa-Zaa-|-(S,diacylglyceryl)Cys-, in which Xaa is hydrophobic (preferably Leu), and Yaa (Ala or Ser) and Zaa (Gly or Ala) have small, neutral side chains.</text>
        <dbReference type="EC" id="3.4.23.36"/>
    </reaction>
</comment>
<comment type="pathway">
    <text evidence="1">Protein modification; lipoprotein biosynthesis (signal peptide cleavage).</text>
</comment>
<comment type="subcellular location">
    <subcellularLocation>
        <location evidence="1">Cell membrane</location>
        <topology evidence="1">Multi-pass membrane protein</topology>
    </subcellularLocation>
</comment>
<comment type="similarity">
    <text evidence="1">Belongs to the peptidase A8 family.</text>
</comment>
<accession>P65266</accession>
<accession>Q99US2</accession>
<evidence type="ECO:0000255" key="1">
    <source>
        <dbReference type="HAMAP-Rule" id="MF_00161"/>
    </source>
</evidence>